<protein>
    <recommendedName>
        <fullName evidence="1">Phospho-N-acetylmuramoyl-pentapeptide-transferase</fullName>
        <ecNumber evidence="1">2.7.8.13</ecNumber>
    </recommendedName>
    <alternativeName>
        <fullName evidence="1">UDP-MurNAc-pentapeptide phosphotransferase</fullName>
    </alternativeName>
</protein>
<evidence type="ECO:0000255" key="1">
    <source>
        <dbReference type="HAMAP-Rule" id="MF_00038"/>
    </source>
</evidence>
<comment type="function">
    <text evidence="1">Catalyzes the initial step of the lipid cycle reactions in the biosynthesis of the cell wall peptidoglycan: transfers peptidoglycan precursor phospho-MurNAc-pentapeptide from UDP-MurNAc-pentapeptide onto the lipid carrier undecaprenyl phosphate, yielding undecaprenyl-pyrophosphoryl-MurNAc-pentapeptide, known as lipid I.</text>
</comment>
<comment type="catalytic activity">
    <reaction evidence="1">
        <text>UDP-N-acetyl-alpha-D-muramoyl-L-alanyl-gamma-D-glutamyl-meso-2,6-diaminopimeloyl-D-alanyl-D-alanine + di-trans,octa-cis-undecaprenyl phosphate = di-trans,octa-cis-undecaprenyl diphospho-N-acetyl-alpha-D-muramoyl-L-alanyl-D-glutamyl-meso-2,6-diaminopimeloyl-D-alanyl-D-alanine + UMP</text>
        <dbReference type="Rhea" id="RHEA:28386"/>
        <dbReference type="ChEBI" id="CHEBI:57865"/>
        <dbReference type="ChEBI" id="CHEBI:60392"/>
        <dbReference type="ChEBI" id="CHEBI:61386"/>
        <dbReference type="ChEBI" id="CHEBI:61387"/>
        <dbReference type="EC" id="2.7.8.13"/>
    </reaction>
</comment>
<comment type="cofactor">
    <cofactor evidence="1">
        <name>Mg(2+)</name>
        <dbReference type="ChEBI" id="CHEBI:18420"/>
    </cofactor>
</comment>
<comment type="pathway">
    <text evidence="1">Cell wall biogenesis; peptidoglycan biosynthesis.</text>
</comment>
<comment type="subcellular location">
    <subcellularLocation>
        <location evidence="1">Cell inner membrane</location>
        <topology evidence="1">Multi-pass membrane protein</topology>
    </subcellularLocation>
</comment>
<comment type="similarity">
    <text evidence="1">Belongs to the glycosyltransferase 4 family. MraY subfamily.</text>
</comment>
<keyword id="KW-0131">Cell cycle</keyword>
<keyword id="KW-0132">Cell division</keyword>
<keyword id="KW-0997">Cell inner membrane</keyword>
<keyword id="KW-1003">Cell membrane</keyword>
<keyword id="KW-0133">Cell shape</keyword>
<keyword id="KW-0961">Cell wall biogenesis/degradation</keyword>
<keyword id="KW-0460">Magnesium</keyword>
<keyword id="KW-0472">Membrane</keyword>
<keyword id="KW-0479">Metal-binding</keyword>
<keyword id="KW-0573">Peptidoglycan synthesis</keyword>
<keyword id="KW-0808">Transferase</keyword>
<keyword id="KW-0812">Transmembrane</keyword>
<keyword id="KW-1133">Transmembrane helix</keyword>
<sequence length="363" mass="40558">MGLIFFRYDRCYMLSVLSYLHVYFGPFRLLQSYAVLMGIALYAGFFFTYGVLPSAYRFLPQDRGRAFAPCAQEAAGKPTGAGVIFVSVFVLLVYLLMRPSFVHALILLLTWGVMLTGYLDDCAQVCWGEYRKGALDFLFAVLTAALLGHFYFHDQVFWWFPFFSDPVFVSPFLFFAGSVVILWMSINATNCTDGVDGLSGALVLMALLSMGTIFYFLLGNVRAAQYLLVPFVVDGAQWALMSFALAGALMGYVWRNAHPSTVLMGDAGSRALGFFIGVLVLISGNPFLLLMTSGVILVNGGTGLLKVVLLRFFHVRILSRVRFPLHDHMRENWHWSTAQVLLRFMILQGLLTIGLLGVLFKLR</sequence>
<organism>
    <name type="scientific">Treponema pallidum subsp. pallidum (strain SS14)</name>
    <dbReference type="NCBI Taxonomy" id="455434"/>
    <lineage>
        <taxon>Bacteria</taxon>
        <taxon>Pseudomonadati</taxon>
        <taxon>Spirochaetota</taxon>
        <taxon>Spirochaetia</taxon>
        <taxon>Spirochaetales</taxon>
        <taxon>Treponemataceae</taxon>
        <taxon>Treponema</taxon>
    </lineage>
</organism>
<gene>
    <name evidence="1" type="primary">mraY</name>
    <name type="ordered locus">TPASS_0345</name>
</gene>
<proteinExistence type="inferred from homology"/>
<reference key="1">
    <citation type="journal article" date="2008" name="BMC Microbiol.">
        <title>Complete genome sequence of Treponema pallidum ssp. pallidum strain SS14 determined with oligonucleotide arrays.</title>
        <authorList>
            <person name="Matejkova P."/>
            <person name="Strouhal M."/>
            <person name="Smajs D."/>
            <person name="Norris S.J."/>
            <person name="Palzkill T."/>
            <person name="Petrosino J.F."/>
            <person name="Sodergren E."/>
            <person name="Norton J.E."/>
            <person name="Singh J."/>
            <person name="Richmond T.A."/>
            <person name="Molla M.N."/>
            <person name="Albert T.J."/>
            <person name="Weinstock G.M."/>
        </authorList>
    </citation>
    <scope>NUCLEOTIDE SEQUENCE [LARGE SCALE GENOMIC DNA]</scope>
    <source>
        <strain>SS14</strain>
    </source>
</reference>
<feature type="chain" id="PRO_1000090684" description="Phospho-N-acetylmuramoyl-pentapeptide-transferase">
    <location>
        <begin position="1"/>
        <end position="363"/>
    </location>
</feature>
<feature type="transmembrane region" description="Helical" evidence="1">
    <location>
        <begin position="33"/>
        <end position="53"/>
    </location>
</feature>
<feature type="transmembrane region" description="Helical" evidence="1">
    <location>
        <begin position="82"/>
        <end position="102"/>
    </location>
</feature>
<feature type="transmembrane region" description="Helical" evidence="1">
    <location>
        <begin position="105"/>
        <end position="125"/>
    </location>
</feature>
<feature type="transmembrane region" description="Helical" evidence="1">
    <location>
        <begin position="133"/>
        <end position="153"/>
    </location>
</feature>
<feature type="transmembrane region" description="Helical" evidence="1">
    <location>
        <begin position="166"/>
        <end position="186"/>
    </location>
</feature>
<feature type="transmembrane region" description="Helical" evidence="1">
    <location>
        <begin position="198"/>
        <end position="218"/>
    </location>
</feature>
<feature type="transmembrane region" description="Helical" evidence="1">
    <location>
        <begin position="227"/>
        <end position="247"/>
    </location>
</feature>
<feature type="transmembrane region" description="Helical" evidence="1">
    <location>
        <begin position="271"/>
        <end position="291"/>
    </location>
</feature>
<feature type="transmembrane region" description="Helical" evidence="1">
    <location>
        <begin position="295"/>
        <end position="315"/>
    </location>
</feature>
<feature type="transmembrane region" description="Helical" evidence="1">
    <location>
        <begin position="340"/>
        <end position="360"/>
    </location>
</feature>
<accession>B2S2U2</accession>
<dbReference type="EC" id="2.7.8.13" evidence="1"/>
<dbReference type="EMBL" id="CP000805">
    <property type="protein sequence ID" value="ACD70771.1"/>
    <property type="molecule type" value="Genomic_DNA"/>
</dbReference>
<dbReference type="RefSeq" id="WP_010881793.1">
    <property type="nucleotide sequence ID" value="NC_021508.1"/>
</dbReference>
<dbReference type="SMR" id="B2S2U2"/>
<dbReference type="KEGG" id="tpp:TPASS_0345"/>
<dbReference type="PATRIC" id="fig|455434.6.peg.345"/>
<dbReference type="UniPathway" id="UPA00219"/>
<dbReference type="Proteomes" id="UP000001202">
    <property type="component" value="Chromosome"/>
</dbReference>
<dbReference type="GO" id="GO:0005886">
    <property type="term" value="C:plasma membrane"/>
    <property type="evidence" value="ECO:0007669"/>
    <property type="project" value="UniProtKB-SubCell"/>
</dbReference>
<dbReference type="GO" id="GO:0046872">
    <property type="term" value="F:metal ion binding"/>
    <property type="evidence" value="ECO:0007669"/>
    <property type="project" value="UniProtKB-KW"/>
</dbReference>
<dbReference type="GO" id="GO:0008963">
    <property type="term" value="F:phospho-N-acetylmuramoyl-pentapeptide-transferase activity"/>
    <property type="evidence" value="ECO:0007669"/>
    <property type="project" value="UniProtKB-UniRule"/>
</dbReference>
<dbReference type="GO" id="GO:0051992">
    <property type="term" value="F:UDP-N-acetylmuramoyl-L-alanyl-D-glutamyl-meso-2,6-diaminopimelyl-D-alanyl-D-alanine:undecaprenyl-phosphate transferase activity"/>
    <property type="evidence" value="ECO:0007669"/>
    <property type="project" value="RHEA"/>
</dbReference>
<dbReference type="GO" id="GO:0051301">
    <property type="term" value="P:cell division"/>
    <property type="evidence" value="ECO:0007669"/>
    <property type="project" value="UniProtKB-KW"/>
</dbReference>
<dbReference type="GO" id="GO:0071555">
    <property type="term" value="P:cell wall organization"/>
    <property type="evidence" value="ECO:0007669"/>
    <property type="project" value="UniProtKB-KW"/>
</dbReference>
<dbReference type="GO" id="GO:0009252">
    <property type="term" value="P:peptidoglycan biosynthetic process"/>
    <property type="evidence" value="ECO:0007669"/>
    <property type="project" value="UniProtKB-UniRule"/>
</dbReference>
<dbReference type="GO" id="GO:0008360">
    <property type="term" value="P:regulation of cell shape"/>
    <property type="evidence" value="ECO:0007669"/>
    <property type="project" value="UniProtKB-KW"/>
</dbReference>
<dbReference type="CDD" id="cd06852">
    <property type="entry name" value="GT_MraY"/>
    <property type="match status" value="1"/>
</dbReference>
<dbReference type="HAMAP" id="MF_00038">
    <property type="entry name" value="MraY"/>
    <property type="match status" value="1"/>
</dbReference>
<dbReference type="InterPro" id="IPR000715">
    <property type="entry name" value="Glycosyl_transferase_4"/>
</dbReference>
<dbReference type="InterPro" id="IPR003524">
    <property type="entry name" value="PNAcMuramoyl-5peptid_Trfase"/>
</dbReference>
<dbReference type="InterPro" id="IPR018480">
    <property type="entry name" value="PNAcMuramoyl-5peptid_Trfase_CS"/>
</dbReference>
<dbReference type="PANTHER" id="PTHR22926">
    <property type="entry name" value="PHOSPHO-N-ACETYLMURAMOYL-PENTAPEPTIDE-TRANSFERASE"/>
    <property type="match status" value="1"/>
</dbReference>
<dbReference type="PANTHER" id="PTHR22926:SF5">
    <property type="entry name" value="PHOSPHO-N-ACETYLMURAMOYL-PENTAPEPTIDE-TRANSFERASE HOMOLOG"/>
    <property type="match status" value="1"/>
</dbReference>
<dbReference type="Pfam" id="PF00953">
    <property type="entry name" value="Glycos_transf_4"/>
    <property type="match status" value="1"/>
</dbReference>
<dbReference type="PROSITE" id="PS01347">
    <property type="entry name" value="MRAY_1"/>
    <property type="match status" value="1"/>
</dbReference>
<dbReference type="PROSITE" id="PS01348">
    <property type="entry name" value="MRAY_2"/>
    <property type="match status" value="1"/>
</dbReference>
<name>MRAY_TREPS</name>